<proteinExistence type="inferred from homology"/>
<reference key="1">
    <citation type="journal article" date="2000" name="Nucleic Acids Res.">
        <title>Genome sequences of Chlamydia trachomatis MoPn and Chlamydia pneumoniae AR39.</title>
        <authorList>
            <person name="Read T.D."/>
            <person name="Brunham R.C."/>
            <person name="Shen C."/>
            <person name="Gill S.R."/>
            <person name="Heidelberg J.F."/>
            <person name="White O."/>
            <person name="Hickey E.K."/>
            <person name="Peterson J.D."/>
            <person name="Utterback T.R."/>
            <person name="Berry K.J."/>
            <person name="Bass S."/>
            <person name="Linher K.D."/>
            <person name="Weidman J.F."/>
            <person name="Khouri H.M."/>
            <person name="Craven B."/>
            <person name="Bowman C."/>
            <person name="Dodson R.J."/>
            <person name="Gwinn M.L."/>
            <person name="Nelson W.C."/>
            <person name="DeBoy R.T."/>
            <person name="Kolonay J.F."/>
            <person name="McClarty G."/>
            <person name="Salzberg S.L."/>
            <person name="Eisen J.A."/>
            <person name="Fraser C.M."/>
        </authorList>
    </citation>
    <scope>NUCLEOTIDE SEQUENCE [LARGE SCALE GENOMIC DNA]</scope>
    <source>
        <strain>MoPn / Nigg</strain>
    </source>
</reference>
<reference key="2">
    <citation type="journal article" date="1990" name="J. Bacteriol.">
        <title>Heat shock response of murine Chlamydia trachomatis.</title>
        <authorList>
            <person name="Engel J.N."/>
            <person name="Pollack J."/>
            <person name="Perara E."/>
            <person name="Ganem D."/>
        </authorList>
    </citation>
    <scope>NUCLEOTIDE SEQUENCE [GENOMIC DNA] OF 1-161</scope>
    <source>
        <strain>MoPn</strain>
    </source>
</reference>
<accession>Q46398</accession>
<accession>Q46399</accession>
<feature type="chain" id="PRO_0000176628" description="Large ribosomal subunit protein bL9">
    <location>
        <begin position="1"/>
        <end position="167"/>
    </location>
</feature>
<feature type="sequence conflict" description="In Ref. 2; AAA23135." evidence="2" ref="2">
    <original>L</original>
    <variation>P</variation>
    <location>
        <position position="8"/>
    </location>
</feature>
<feature type="sequence conflict" description="In Ref. 2." evidence="2" ref="2">
    <original>QS</original>
    <variation>KA</variation>
    <location>
        <begin position="160"/>
        <end position="161"/>
    </location>
</feature>
<comment type="function">
    <text evidence="1">Binds to the 23S rRNA.</text>
</comment>
<comment type="similarity">
    <text evidence="1">Belongs to the bacterial ribosomal protein bL9 family.</text>
</comment>
<comment type="sequence caution" evidence="2">
    <conflict type="frameshift">
        <sequence resource="EMBL-CDS" id="AAA23136"/>
    </conflict>
</comment>
<protein>
    <recommendedName>
        <fullName evidence="1">Large ribosomal subunit protein bL9</fullName>
    </recommendedName>
    <alternativeName>
        <fullName evidence="2">50S ribosomal protein L9</fullName>
    </alternativeName>
</protein>
<organism>
    <name type="scientific">Chlamydia muridarum (strain MoPn / Nigg)</name>
    <dbReference type="NCBI Taxonomy" id="243161"/>
    <lineage>
        <taxon>Bacteria</taxon>
        <taxon>Pseudomonadati</taxon>
        <taxon>Chlamydiota</taxon>
        <taxon>Chlamydiia</taxon>
        <taxon>Chlamydiales</taxon>
        <taxon>Chlamydiaceae</taxon>
        <taxon>Chlamydia/Chlamydophila group</taxon>
        <taxon>Chlamydia</taxon>
    </lineage>
</organism>
<name>RL9_CHLMU</name>
<keyword id="KW-0687">Ribonucleoprotein</keyword>
<keyword id="KW-0689">Ribosomal protein</keyword>
<keyword id="KW-0694">RNA-binding</keyword>
<keyword id="KW-0699">rRNA-binding</keyword>
<sequence>MKPQLLLLEDVDGLGRSGDLVVAKPGYVRNYLLPKGKAVVASAGTLRLQAKLQEQRLLQAAADKEESLRLAETLRSLVLDFQVRVDSENNMYGSVTVNDIISVADQKGVVLTRKNFPRAHSGVKTLGKHVIGLKLKEGVTADLHLEVRADHEIAEQKELQSMEEQED</sequence>
<dbReference type="EMBL" id="AE002160">
    <property type="protein sequence ID" value="AAF39060.1"/>
    <property type="molecule type" value="Genomic_DNA"/>
</dbReference>
<dbReference type="EMBL" id="M62820">
    <property type="protein sequence ID" value="AAA23135.1"/>
    <property type="status" value="ALT_FRAME"/>
    <property type="molecule type" value="Genomic_DNA"/>
</dbReference>
<dbReference type="EMBL" id="M62820">
    <property type="protein sequence ID" value="AAA23136.1"/>
    <property type="status" value="ALT_FRAME"/>
    <property type="molecule type" value="Genomic_DNA"/>
</dbReference>
<dbReference type="PIR" id="E37840">
    <property type="entry name" value="E37840"/>
</dbReference>
<dbReference type="PIR" id="F37840">
    <property type="entry name" value="F37840"/>
</dbReference>
<dbReference type="PIR" id="F81732">
    <property type="entry name" value="F81732"/>
</dbReference>
<dbReference type="RefSeq" id="WP_010229759.1">
    <property type="nucleotide sequence ID" value="NZ_CP063055.1"/>
</dbReference>
<dbReference type="SMR" id="Q46398"/>
<dbReference type="GeneID" id="1246312"/>
<dbReference type="KEGG" id="cmu:TC_0186"/>
<dbReference type="eggNOG" id="COG0359">
    <property type="taxonomic scope" value="Bacteria"/>
</dbReference>
<dbReference type="HOGENOM" id="CLU_078938_3_0_0"/>
<dbReference type="OrthoDB" id="9788336at2"/>
<dbReference type="Proteomes" id="UP000000800">
    <property type="component" value="Chromosome"/>
</dbReference>
<dbReference type="GO" id="GO:1990904">
    <property type="term" value="C:ribonucleoprotein complex"/>
    <property type="evidence" value="ECO:0007669"/>
    <property type="project" value="UniProtKB-KW"/>
</dbReference>
<dbReference type="GO" id="GO:0005840">
    <property type="term" value="C:ribosome"/>
    <property type="evidence" value="ECO:0007669"/>
    <property type="project" value="UniProtKB-KW"/>
</dbReference>
<dbReference type="GO" id="GO:0019843">
    <property type="term" value="F:rRNA binding"/>
    <property type="evidence" value="ECO:0007669"/>
    <property type="project" value="UniProtKB-UniRule"/>
</dbReference>
<dbReference type="GO" id="GO:0003735">
    <property type="term" value="F:structural constituent of ribosome"/>
    <property type="evidence" value="ECO:0007669"/>
    <property type="project" value="InterPro"/>
</dbReference>
<dbReference type="GO" id="GO:0006412">
    <property type="term" value="P:translation"/>
    <property type="evidence" value="ECO:0007669"/>
    <property type="project" value="UniProtKB-UniRule"/>
</dbReference>
<dbReference type="Gene3D" id="3.10.430.100">
    <property type="entry name" value="Ribosomal protein L9, C-terminal domain"/>
    <property type="match status" value="1"/>
</dbReference>
<dbReference type="Gene3D" id="3.40.5.10">
    <property type="entry name" value="Ribosomal protein L9, N-terminal domain"/>
    <property type="match status" value="1"/>
</dbReference>
<dbReference type="HAMAP" id="MF_00503">
    <property type="entry name" value="Ribosomal_bL9"/>
    <property type="match status" value="1"/>
</dbReference>
<dbReference type="InterPro" id="IPR000244">
    <property type="entry name" value="Ribosomal_bL9"/>
</dbReference>
<dbReference type="InterPro" id="IPR009027">
    <property type="entry name" value="Ribosomal_bL9/RNase_H1_N"/>
</dbReference>
<dbReference type="InterPro" id="IPR020594">
    <property type="entry name" value="Ribosomal_bL9_bac/chp"/>
</dbReference>
<dbReference type="InterPro" id="IPR020069">
    <property type="entry name" value="Ribosomal_bL9_C"/>
</dbReference>
<dbReference type="InterPro" id="IPR036791">
    <property type="entry name" value="Ribosomal_bL9_C_sf"/>
</dbReference>
<dbReference type="InterPro" id="IPR020070">
    <property type="entry name" value="Ribosomal_bL9_N"/>
</dbReference>
<dbReference type="InterPro" id="IPR036935">
    <property type="entry name" value="Ribosomal_bL9_N_sf"/>
</dbReference>
<dbReference type="NCBIfam" id="TIGR00158">
    <property type="entry name" value="L9"/>
    <property type="match status" value="1"/>
</dbReference>
<dbReference type="PANTHER" id="PTHR21368">
    <property type="entry name" value="50S RIBOSOMAL PROTEIN L9"/>
    <property type="match status" value="1"/>
</dbReference>
<dbReference type="Pfam" id="PF03948">
    <property type="entry name" value="Ribosomal_L9_C"/>
    <property type="match status" value="1"/>
</dbReference>
<dbReference type="Pfam" id="PF01281">
    <property type="entry name" value="Ribosomal_L9_N"/>
    <property type="match status" value="1"/>
</dbReference>
<dbReference type="SUPFAM" id="SSF55658">
    <property type="entry name" value="L9 N-domain-like"/>
    <property type="match status" value="1"/>
</dbReference>
<dbReference type="SUPFAM" id="SSF55653">
    <property type="entry name" value="Ribosomal protein L9 C-domain"/>
    <property type="match status" value="1"/>
</dbReference>
<dbReference type="PROSITE" id="PS00651">
    <property type="entry name" value="RIBOSOMAL_L9"/>
    <property type="match status" value="1"/>
</dbReference>
<gene>
    <name evidence="1" type="primary">rplI</name>
    <name type="ordered locus">TC_0186</name>
</gene>
<evidence type="ECO:0000255" key="1">
    <source>
        <dbReference type="HAMAP-Rule" id="MF_00503"/>
    </source>
</evidence>
<evidence type="ECO:0000305" key="2"/>